<feature type="chain" id="PRO_0000406586" description="Nuclear egress protein 2">
    <location>
        <begin position="1"/>
        <end position="277"/>
    </location>
</feature>
<feature type="topological domain" description="Perinuclear space" evidence="1">
    <location>
        <begin position="1"/>
        <end position="250"/>
    </location>
</feature>
<feature type="transmembrane region" description="Helical" evidence="1">
    <location>
        <begin position="251"/>
        <end position="271"/>
    </location>
</feature>
<feature type="topological domain" description="Nuclear" evidence="1">
    <location>
        <begin position="272"/>
        <end position="277"/>
    </location>
</feature>
<gene>
    <name evidence="1" type="primary">NEC2</name>
    <name type="ordered locus">MDV047</name>
</gene>
<proteinExistence type="inferred from homology"/>
<evidence type="ECO:0000255" key="1">
    <source>
        <dbReference type="HAMAP-Rule" id="MF_04024"/>
    </source>
</evidence>
<accession>Q9E6N5</accession>
<comment type="function">
    <text evidence="1">Plays an essential role in virion nuclear egress, the first step of virion release from infected cell. Within the host nucleus, NEC1 interacts with the newly formed capsid through the vertexes and directs it to the inner nuclear membrane by associating with NEC2. Induces the budding of the capsid at the inner nuclear membrane as well as its envelopment into the perinuclear space. There, the NEC1/NEC2 complex promotes the fusion of the enveloped capsid with the outer nuclear membrane and the subsequent release of the viral capsid into the cytoplasm where it will reach the secondary budding sites in the host Golgi or trans-Golgi network.</text>
</comment>
<comment type="subunit">
    <text evidence="1">Forms a heterohexameric complex with NEC1.</text>
</comment>
<comment type="subcellular location">
    <subcellularLocation>
        <location evidence="1">Host nucleus inner membrane</location>
        <topology evidence="1">Single-pass membrane protein</topology>
    </subcellularLocation>
    <text evidence="1">Also localizes at the transient membrane of perinuclear virions.</text>
</comment>
<comment type="PTM">
    <text evidence="1">Phosphorylated.</text>
</comment>
<comment type="similarity">
    <text evidence="1">Belongs to the herpesviridae NEC2 protein family.</text>
</comment>
<organism>
    <name type="scientific">Gallid herpesvirus 2 (strain Chicken/Md5/ATCC VR-987)</name>
    <name type="common">GaHV-2</name>
    <name type="synonym">Marek's disease herpesvirus type 1</name>
    <dbReference type="NCBI Taxonomy" id="10389"/>
    <lineage>
        <taxon>Viruses</taxon>
        <taxon>Duplodnaviria</taxon>
        <taxon>Heunggongvirae</taxon>
        <taxon>Peploviricota</taxon>
        <taxon>Herviviricetes</taxon>
        <taxon>Herpesvirales</taxon>
        <taxon>Orthoherpesviridae</taxon>
        <taxon>Alphaherpesvirinae</taxon>
        <taxon>Mardivirus</taxon>
        <taxon>Mardivirus gallidalpha2</taxon>
        <taxon>Gallid alphaherpesvirus 2</taxon>
    </lineage>
</organism>
<organismHost>
    <name type="scientific">Gallus gallus</name>
    <name type="common">Chicken</name>
    <dbReference type="NCBI Taxonomy" id="9031"/>
</organismHost>
<name>NEC2_GAHVM</name>
<sequence>MEVIPNINSRRAGLIARIKLIVRGDLTTGNYDPVLAESFSGCIPTRSAFQFSGADGVESAFPVEYVMRMMNDWAKGECNPYIKIQNTGVSVLIEGFFDPPINATKAPLCTDKVNVLLNTTESTGIVLSDINKIKQSIGVDCRPFQACLIVNCFVRLPIVQLAFRFVGPSDPGRTTKLLDSAIAAYDAKIRQRRKRNLQIMESKSQDHTSDGCIPIPIIDETHRSGITGESKSLFGMFKNIASGECVTTIRIPRYIVMLWIFSVLLAMVTWGSYRLYS</sequence>
<protein>
    <recommendedName>
        <fullName evidence="1">Nuclear egress protein 2</fullName>
    </recommendedName>
</protein>
<keyword id="KW-1043">Host membrane</keyword>
<keyword id="KW-1048">Host nucleus</keyword>
<keyword id="KW-0426">Late protein</keyword>
<keyword id="KW-0472">Membrane</keyword>
<keyword id="KW-0597">Phosphoprotein</keyword>
<keyword id="KW-1185">Reference proteome</keyword>
<keyword id="KW-0812">Transmembrane</keyword>
<keyword id="KW-1133">Transmembrane helix</keyword>
<dbReference type="EMBL" id="AF243438">
    <property type="protein sequence ID" value="AAG14227.1"/>
    <property type="molecule type" value="Genomic_DNA"/>
</dbReference>
<dbReference type="RefSeq" id="YP_001033963.1">
    <property type="nucleotide sequence ID" value="NC_002229.3"/>
</dbReference>
<dbReference type="SMR" id="Q9E6N5"/>
<dbReference type="GeneID" id="4811507"/>
<dbReference type="KEGG" id="vg:4811507"/>
<dbReference type="Proteomes" id="UP000008072">
    <property type="component" value="Segment"/>
</dbReference>
<dbReference type="GO" id="GO:0044201">
    <property type="term" value="C:host cell nuclear inner membrane"/>
    <property type="evidence" value="ECO:0007669"/>
    <property type="project" value="UniProtKB-SubCell"/>
</dbReference>
<dbReference type="GO" id="GO:0016020">
    <property type="term" value="C:membrane"/>
    <property type="evidence" value="ECO:0007669"/>
    <property type="project" value="UniProtKB-KW"/>
</dbReference>
<dbReference type="HAMAP" id="MF_04024">
    <property type="entry name" value="HSV_NEC2"/>
    <property type="match status" value="1"/>
</dbReference>
<dbReference type="InterPro" id="IPR007626">
    <property type="entry name" value="Herpesvirus_viron_egress-type"/>
</dbReference>
<dbReference type="Pfam" id="PF04541">
    <property type="entry name" value="Herpes_U34"/>
    <property type="match status" value="1"/>
</dbReference>
<reference key="1">
    <citation type="journal article" date="2000" name="J. Virol.">
        <title>The genome of a very virulent Marek's disease virus.</title>
        <authorList>
            <person name="Tulman E.R."/>
            <person name="Afonso C.L."/>
            <person name="Lu Z."/>
            <person name="Zsak L."/>
            <person name="Rock D.L."/>
            <person name="Kutish G.F."/>
        </authorList>
    </citation>
    <scope>NUCLEOTIDE SEQUENCE [LARGE SCALE GENOMIC DNA]</scope>
</reference>